<dbReference type="EC" id="3.1.1.96" evidence="1"/>
<dbReference type="EMBL" id="CP001120">
    <property type="protein sequence ID" value="ACF66596.1"/>
    <property type="molecule type" value="Genomic_DNA"/>
</dbReference>
<dbReference type="RefSeq" id="WP_000560969.1">
    <property type="nucleotide sequence ID" value="NC_011083.1"/>
</dbReference>
<dbReference type="SMR" id="B4TBW0"/>
<dbReference type="KEGG" id="seh:SeHA_C4352"/>
<dbReference type="HOGENOM" id="CLU_076901_1_0_6"/>
<dbReference type="Proteomes" id="UP000001866">
    <property type="component" value="Chromosome"/>
</dbReference>
<dbReference type="GO" id="GO:0005737">
    <property type="term" value="C:cytoplasm"/>
    <property type="evidence" value="ECO:0007669"/>
    <property type="project" value="UniProtKB-SubCell"/>
</dbReference>
<dbReference type="GO" id="GO:0051500">
    <property type="term" value="F:D-tyrosyl-tRNA(Tyr) deacylase activity"/>
    <property type="evidence" value="ECO:0007669"/>
    <property type="project" value="TreeGrafter"/>
</dbReference>
<dbReference type="GO" id="GO:0106026">
    <property type="term" value="F:Gly-tRNA(Ala) deacylase activity"/>
    <property type="evidence" value="ECO:0007669"/>
    <property type="project" value="UniProtKB-UniRule"/>
</dbReference>
<dbReference type="GO" id="GO:0043908">
    <property type="term" value="F:Ser(Gly)-tRNA(Ala) hydrolase activity"/>
    <property type="evidence" value="ECO:0007669"/>
    <property type="project" value="UniProtKB-UniRule"/>
</dbReference>
<dbReference type="GO" id="GO:0000049">
    <property type="term" value="F:tRNA binding"/>
    <property type="evidence" value="ECO:0007669"/>
    <property type="project" value="UniProtKB-UniRule"/>
</dbReference>
<dbReference type="GO" id="GO:0019478">
    <property type="term" value="P:D-amino acid catabolic process"/>
    <property type="evidence" value="ECO:0007669"/>
    <property type="project" value="UniProtKB-UniRule"/>
</dbReference>
<dbReference type="CDD" id="cd00563">
    <property type="entry name" value="Dtyr_deacylase"/>
    <property type="match status" value="1"/>
</dbReference>
<dbReference type="FunFam" id="3.50.80.10:FF:000001">
    <property type="entry name" value="D-aminoacyl-tRNA deacylase"/>
    <property type="match status" value="1"/>
</dbReference>
<dbReference type="Gene3D" id="3.50.80.10">
    <property type="entry name" value="D-tyrosyl-tRNA(Tyr) deacylase"/>
    <property type="match status" value="1"/>
</dbReference>
<dbReference type="HAMAP" id="MF_00518">
    <property type="entry name" value="Deacylase_Dtd"/>
    <property type="match status" value="1"/>
</dbReference>
<dbReference type="InterPro" id="IPR003732">
    <property type="entry name" value="Daa-tRNA_deacyls_DTD"/>
</dbReference>
<dbReference type="InterPro" id="IPR023509">
    <property type="entry name" value="DTD-like_sf"/>
</dbReference>
<dbReference type="NCBIfam" id="TIGR00256">
    <property type="entry name" value="D-aminoacyl-tRNA deacylase"/>
    <property type="match status" value="1"/>
</dbReference>
<dbReference type="PANTHER" id="PTHR10472:SF5">
    <property type="entry name" value="D-AMINOACYL-TRNA DEACYLASE 1"/>
    <property type="match status" value="1"/>
</dbReference>
<dbReference type="PANTHER" id="PTHR10472">
    <property type="entry name" value="D-TYROSYL-TRNA TYR DEACYLASE"/>
    <property type="match status" value="1"/>
</dbReference>
<dbReference type="Pfam" id="PF02580">
    <property type="entry name" value="Tyr_Deacylase"/>
    <property type="match status" value="1"/>
</dbReference>
<dbReference type="SUPFAM" id="SSF69500">
    <property type="entry name" value="DTD-like"/>
    <property type="match status" value="1"/>
</dbReference>
<accession>B4TBW0</accession>
<proteinExistence type="inferred from homology"/>
<organism>
    <name type="scientific">Salmonella heidelberg (strain SL476)</name>
    <dbReference type="NCBI Taxonomy" id="454169"/>
    <lineage>
        <taxon>Bacteria</taxon>
        <taxon>Pseudomonadati</taxon>
        <taxon>Pseudomonadota</taxon>
        <taxon>Gammaproteobacteria</taxon>
        <taxon>Enterobacterales</taxon>
        <taxon>Enterobacteriaceae</taxon>
        <taxon>Salmonella</taxon>
    </lineage>
</organism>
<keyword id="KW-0963">Cytoplasm</keyword>
<keyword id="KW-0378">Hydrolase</keyword>
<keyword id="KW-0694">RNA-binding</keyword>
<keyword id="KW-0820">tRNA-binding</keyword>
<evidence type="ECO:0000255" key="1">
    <source>
        <dbReference type="HAMAP-Rule" id="MF_00518"/>
    </source>
</evidence>
<name>DTD_SALHS</name>
<protein>
    <recommendedName>
        <fullName evidence="1">D-aminoacyl-tRNA deacylase</fullName>
        <shortName evidence="1">DTD</shortName>
        <ecNumber evidence="1">3.1.1.96</ecNumber>
    </recommendedName>
    <alternativeName>
        <fullName evidence="1">Gly-tRNA(Ala) deacylase</fullName>
    </alternativeName>
</protein>
<gene>
    <name evidence="1" type="primary">dtd</name>
    <name type="ordered locus">SeHA_C4352</name>
</gene>
<feature type="chain" id="PRO_1000127569" description="D-aminoacyl-tRNA deacylase">
    <location>
        <begin position="1"/>
        <end position="145"/>
    </location>
</feature>
<feature type="short sequence motif" description="Gly-cisPro motif, important for rejection of L-amino acids" evidence="1">
    <location>
        <begin position="137"/>
        <end position="138"/>
    </location>
</feature>
<sequence length="145" mass="15926">MIALIQRVTRASVTVEDEVTGEIGPGLLVLLGVEKEDDEQKANRLCERVLGYRIFSDADGKMNLNVQQAGGSVLVVSQFTLAADTERGMRPSFSGGAAPDRAQALYEYFVERCRQQAINTQTGRFAADMQVELVNDGPVTFWLQV</sequence>
<comment type="function">
    <text evidence="1">An aminoacyl-tRNA editing enzyme that deacylates mischarged D-aminoacyl-tRNAs. Also deacylates mischarged glycyl-tRNA(Ala), protecting cells against glycine mischarging by AlaRS. Acts via tRNA-based rather than protein-based catalysis; rejects L-amino acids rather than detecting D-amino acids in the active site. By recycling D-aminoacyl-tRNA to D-amino acids and free tRNA molecules, this enzyme counteracts the toxicity associated with the formation of D-aminoacyl-tRNA entities in vivo and helps enforce protein L-homochirality.</text>
</comment>
<comment type="catalytic activity">
    <reaction evidence="1">
        <text>glycyl-tRNA(Ala) + H2O = tRNA(Ala) + glycine + H(+)</text>
        <dbReference type="Rhea" id="RHEA:53744"/>
        <dbReference type="Rhea" id="RHEA-COMP:9657"/>
        <dbReference type="Rhea" id="RHEA-COMP:13640"/>
        <dbReference type="ChEBI" id="CHEBI:15377"/>
        <dbReference type="ChEBI" id="CHEBI:15378"/>
        <dbReference type="ChEBI" id="CHEBI:57305"/>
        <dbReference type="ChEBI" id="CHEBI:78442"/>
        <dbReference type="ChEBI" id="CHEBI:78522"/>
        <dbReference type="EC" id="3.1.1.96"/>
    </reaction>
</comment>
<comment type="catalytic activity">
    <reaction evidence="1">
        <text>a D-aminoacyl-tRNA + H2O = a tRNA + a D-alpha-amino acid + H(+)</text>
        <dbReference type="Rhea" id="RHEA:13953"/>
        <dbReference type="Rhea" id="RHEA-COMP:10123"/>
        <dbReference type="Rhea" id="RHEA-COMP:10124"/>
        <dbReference type="ChEBI" id="CHEBI:15377"/>
        <dbReference type="ChEBI" id="CHEBI:15378"/>
        <dbReference type="ChEBI" id="CHEBI:59871"/>
        <dbReference type="ChEBI" id="CHEBI:78442"/>
        <dbReference type="ChEBI" id="CHEBI:79333"/>
        <dbReference type="EC" id="3.1.1.96"/>
    </reaction>
</comment>
<comment type="subunit">
    <text evidence="1">Homodimer.</text>
</comment>
<comment type="subcellular location">
    <subcellularLocation>
        <location evidence="1">Cytoplasm</location>
    </subcellularLocation>
</comment>
<comment type="domain">
    <text evidence="1">A Gly-cisPro motif from one monomer fits into the active site of the other monomer to allow specific chiral rejection of L-amino acids.</text>
</comment>
<comment type="similarity">
    <text evidence="1">Belongs to the DTD family.</text>
</comment>
<reference key="1">
    <citation type="journal article" date="2011" name="J. Bacteriol.">
        <title>Comparative genomics of 28 Salmonella enterica isolates: evidence for CRISPR-mediated adaptive sublineage evolution.</title>
        <authorList>
            <person name="Fricke W.F."/>
            <person name="Mammel M.K."/>
            <person name="McDermott P.F."/>
            <person name="Tartera C."/>
            <person name="White D.G."/>
            <person name="Leclerc J.E."/>
            <person name="Ravel J."/>
            <person name="Cebula T.A."/>
        </authorList>
    </citation>
    <scope>NUCLEOTIDE SEQUENCE [LARGE SCALE GENOMIC DNA]</scope>
    <source>
        <strain>SL476</strain>
    </source>
</reference>